<proteinExistence type="evidence at protein level"/>
<dbReference type="EMBL" id="AF115504">
    <property type="protein sequence ID" value="AAF23077.1"/>
    <property type="molecule type" value="mRNA"/>
</dbReference>
<dbReference type="CCDS" id="CCDS17146.1"/>
<dbReference type="PDB" id="7X14">
    <property type="method" value="X-ray"/>
    <property type="resolution" value="1.68 A"/>
    <property type="chains" value="A=1-125"/>
</dbReference>
<dbReference type="PDBsum" id="7X14"/>
<dbReference type="SMR" id="Q9QY76"/>
<dbReference type="FunCoup" id="Q9QY76">
    <property type="interactions" value="2550"/>
</dbReference>
<dbReference type="IntAct" id="Q9QY76">
    <property type="interactions" value="3"/>
</dbReference>
<dbReference type="MINT" id="Q9QY76"/>
<dbReference type="STRING" id="10090.ENSMUSP00000064699"/>
<dbReference type="GlyGen" id="Q9QY76">
    <property type="glycosylation" value="1 site, 1 O-linked glycan (1 site)"/>
</dbReference>
<dbReference type="iPTMnet" id="Q9QY76"/>
<dbReference type="MetOSite" id="Q9QY76"/>
<dbReference type="PhosphoSitePlus" id="Q9QY76"/>
<dbReference type="SwissPalm" id="Q9QY76"/>
<dbReference type="jPOST" id="Q9QY76"/>
<dbReference type="PaxDb" id="10090-ENSMUSP00000064699"/>
<dbReference type="ProteomicsDB" id="298271"/>
<dbReference type="Pumba" id="Q9QY76"/>
<dbReference type="ABCD" id="Q9QY76">
    <property type="antibodies" value="1 sequenced antibody"/>
</dbReference>
<dbReference type="AGR" id="MGI:1928744"/>
<dbReference type="MGI" id="MGI:1928744">
    <property type="gene designation" value="Vapb"/>
</dbReference>
<dbReference type="eggNOG" id="KOG0439">
    <property type="taxonomic scope" value="Eukaryota"/>
</dbReference>
<dbReference type="InParanoid" id="Q9QY76"/>
<dbReference type="PhylomeDB" id="Q9QY76"/>
<dbReference type="Reactome" id="R-MMU-8980692">
    <property type="pathway name" value="RHOA GTPase cycle"/>
</dbReference>
<dbReference type="Reactome" id="R-MMU-9013106">
    <property type="pathway name" value="RHOC GTPase cycle"/>
</dbReference>
<dbReference type="Reactome" id="R-MMU-9013404">
    <property type="pathway name" value="RAC2 GTPase cycle"/>
</dbReference>
<dbReference type="Reactome" id="R-MMU-9013405">
    <property type="pathway name" value="RHOD GTPase cycle"/>
</dbReference>
<dbReference type="Reactome" id="R-MMU-9013408">
    <property type="pathway name" value="RHOG GTPase cycle"/>
</dbReference>
<dbReference type="CD-CODE" id="CE726F99">
    <property type="entry name" value="Postsynaptic density"/>
</dbReference>
<dbReference type="ChiTaRS" id="Vapb">
    <property type="organism name" value="mouse"/>
</dbReference>
<dbReference type="PRO" id="PR:Q9QY76"/>
<dbReference type="Proteomes" id="UP000000589">
    <property type="component" value="Unplaced"/>
</dbReference>
<dbReference type="RNAct" id="Q9QY76">
    <property type="molecule type" value="protein"/>
</dbReference>
<dbReference type="GO" id="GO:0005789">
    <property type="term" value="C:endoplasmic reticulum membrane"/>
    <property type="evidence" value="ECO:0000250"/>
    <property type="project" value="UniProtKB"/>
</dbReference>
<dbReference type="GO" id="GO:0016020">
    <property type="term" value="C:membrane"/>
    <property type="evidence" value="ECO:0000314"/>
    <property type="project" value="BHF-UCL"/>
</dbReference>
<dbReference type="GO" id="GO:0006874">
    <property type="term" value="P:intracellular calcium ion homeostasis"/>
    <property type="evidence" value="ECO:0000250"/>
    <property type="project" value="UniProtKB"/>
</dbReference>
<dbReference type="GO" id="GO:0036498">
    <property type="term" value="P:IRE1-mediated unfolded protein response"/>
    <property type="evidence" value="ECO:0000250"/>
    <property type="project" value="UniProtKB"/>
</dbReference>
<dbReference type="FunFam" id="2.60.40.10:FF:000334">
    <property type="entry name" value="vesicle-associated membrane protein-associated protein A isoform X1"/>
    <property type="match status" value="1"/>
</dbReference>
<dbReference type="Gene3D" id="2.60.40.10">
    <property type="entry name" value="Immunoglobulins"/>
    <property type="match status" value="1"/>
</dbReference>
<dbReference type="InterPro" id="IPR013783">
    <property type="entry name" value="Ig-like_fold"/>
</dbReference>
<dbReference type="InterPro" id="IPR000535">
    <property type="entry name" value="MSP_dom"/>
</dbReference>
<dbReference type="InterPro" id="IPR008962">
    <property type="entry name" value="PapD-like_sf"/>
</dbReference>
<dbReference type="InterPro" id="IPR016763">
    <property type="entry name" value="VAP"/>
</dbReference>
<dbReference type="PANTHER" id="PTHR10809">
    <property type="entry name" value="VESICLE-ASSOCIATED MEMBRANE PROTEIN-ASSOCIATED PROTEIN"/>
    <property type="match status" value="1"/>
</dbReference>
<dbReference type="PANTHER" id="PTHR10809:SF12">
    <property type="entry name" value="VESICLE-ASSOCIATED MEMBRANE PROTEIN-ASSOCIATED PROTEIN B_C"/>
    <property type="match status" value="1"/>
</dbReference>
<dbReference type="Pfam" id="PF00635">
    <property type="entry name" value="Motile_Sperm"/>
    <property type="match status" value="1"/>
</dbReference>
<dbReference type="PIRSF" id="PIRSF019693">
    <property type="entry name" value="VAMP-associated"/>
    <property type="match status" value="1"/>
</dbReference>
<dbReference type="SUPFAM" id="SSF49354">
    <property type="entry name" value="PapD-like"/>
    <property type="match status" value="1"/>
</dbReference>
<dbReference type="PROSITE" id="PS50202">
    <property type="entry name" value="MSP"/>
    <property type="match status" value="1"/>
</dbReference>
<reference key="1">
    <citation type="submission" date="1998-12" db="EMBL/GenBank/DDBJ databases">
        <title>Two forms of mammalian VAP33.</title>
        <authorList>
            <person name="Tang B.L."/>
            <person name="Low D.L.H."/>
            <person name="Lock M.L."/>
            <person name="Hong W."/>
        </authorList>
    </citation>
    <scope>NUCLEOTIDE SEQUENCE [MRNA]</scope>
</reference>
<reference key="2">
    <citation type="journal article" date="2010" name="Cell">
        <title>A tissue-specific atlas of mouse protein phosphorylation and expression.</title>
        <authorList>
            <person name="Huttlin E.L."/>
            <person name="Jedrychowski M.P."/>
            <person name="Elias J.E."/>
            <person name="Goswami T."/>
            <person name="Rad R."/>
            <person name="Beausoleil S.A."/>
            <person name="Villen J."/>
            <person name="Haas W."/>
            <person name="Sowa M.E."/>
            <person name="Gygi S.P."/>
        </authorList>
    </citation>
    <scope>PHOSPHORYLATION [LARGE SCALE ANALYSIS] AT SER-159</scope>
    <scope>IDENTIFICATION BY MASS SPECTROMETRY [LARGE SCALE ANALYSIS]</scope>
    <source>
        <tissue>Brain</tissue>
        <tissue>Brown adipose tissue</tissue>
        <tissue>Heart</tissue>
        <tissue>Kidney</tissue>
        <tissue>Liver</tissue>
        <tissue>Lung</tissue>
        <tissue>Pancreas</tissue>
        <tissue>Spleen</tissue>
        <tissue>Testis</tissue>
    </source>
</reference>
<reference key="3">
    <citation type="journal article" date="2014" name="Genes Cells">
        <title>Identification and characterization of a neuron-specific isoform of protrudin.</title>
        <authorList>
            <person name="Ohnishi T."/>
            <person name="Shirane M."/>
            <person name="Hashimoto Y."/>
            <person name="Saita S."/>
            <person name="Nakayama K.I."/>
        </authorList>
    </citation>
    <scope>INTERACTION WITH ZFYVE27</scope>
</reference>
<feature type="initiator methionine" description="Removed" evidence="1">
    <location>
        <position position="1"/>
    </location>
</feature>
<feature type="chain" id="PRO_0000213474" description="Vesicle-associated membrane protein-associated protein B">
    <location>
        <begin position="2"/>
        <end position="243"/>
    </location>
</feature>
<feature type="topological domain" description="Cytoplasmic" evidence="3">
    <location>
        <begin position="2"/>
        <end position="218"/>
    </location>
</feature>
<feature type="transmembrane region" description="Helical; Anchor for type IV membrane protein" evidence="3">
    <location>
        <begin position="219"/>
        <end position="239"/>
    </location>
</feature>
<feature type="domain" description="MSP" evidence="4">
    <location>
        <begin position="7"/>
        <end position="124"/>
    </location>
</feature>
<feature type="coiled-coil region" evidence="3">
    <location>
        <begin position="161"/>
        <end position="196"/>
    </location>
</feature>
<feature type="site" description="Involved in binding the phosphorylated serine of the phospho-FFAT motif" evidence="1">
    <location>
        <position position="43"/>
    </location>
</feature>
<feature type="modified residue" description="N-acetylalanine" evidence="1">
    <location>
        <position position="2"/>
    </location>
</feature>
<feature type="modified residue" description="Phosphoserine" evidence="1">
    <location>
        <position position="146"/>
    </location>
</feature>
<feature type="modified residue" description="Phosphoserine" evidence="1">
    <location>
        <position position="156"/>
    </location>
</feature>
<feature type="modified residue" description="Phosphoserine" evidence="8">
    <location>
        <position position="159"/>
    </location>
</feature>
<feature type="modified residue" description="Phosphoserine" evidence="1">
    <location>
        <position position="206"/>
    </location>
</feature>
<feature type="cross-link" description="Glycyl lysine isopeptide (Lys-Gly) (interchain with G-Cter in SUMO1)" evidence="1">
    <location>
        <position position="147"/>
    </location>
</feature>
<feature type="strand" evidence="9">
    <location>
        <begin position="8"/>
        <end position="20"/>
    </location>
</feature>
<feature type="strand" evidence="9">
    <location>
        <begin position="26"/>
        <end position="33"/>
    </location>
</feature>
<feature type="strand" evidence="9">
    <location>
        <begin position="36"/>
        <end position="38"/>
    </location>
</feature>
<feature type="strand" evidence="9">
    <location>
        <begin position="40"/>
        <end position="47"/>
    </location>
</feature>
<feature type="helix" evidence="9">
    <location>
        <begin position="49"/>
        <end position="51"/>
    </location>
</feature>
<feature type="strand" evidence="9">
    <location>
        <begin position="52"/>
        <end position="61"/>
    </location>
</feature>
<feature type="strand" evidence="9">
    <location>
        <begin position="66"/>
        <end position="73"/>
    </location>
</feature>
<feature type="strand" evidence="9">
    <location>
        <begin position="85"/>
        <end position="94"/>
    </location>
</feature>
<feature type="helix" evidence="9">
    <location>
        <begin position="102"/>
        <end position="108"/>
    </location>
</feature>
<feature type="helix" evidence="9">
    <location>
        <begin position="111"/>
        <end position="113"/>
    </location>
</feature>
<feature type="strand" evidence="9">
    <location>
        <begin position="115"/>
        <end position="124"/>
    </location>
</feature>
<organism>
    <name type="scientific">Mus musculus</name>
    <name type="common">Mouse</name>
    <dbReference type="NCBI Taxonomy" id="10090"/>
    <lineage>
        <taxon>Eukaryota</taxon>
        <taxon>Metazoa</taxon>
        <taxon>Chordata</taxon>
        <taxon>Craniata</taxon>
        <taxon>Vertebrata</taxon>
        <taxon>Euteleostomi</taxon>
        <taxon>Mammalia</taxon>
        <taxon>Eutheria</taxon>
        <taxon>Euarchontoglires</taxon>
        <taxon>Glires</taxon>
        <taxon>Rodentia</taxon>
        <taxon>Myomorpha</taxon>
        <taxon>Muroidea</taxon>
        <taxon>Muridae</taxon>
        <taxon>Murinae</taxon>
        <taxon>Mus</taxon>
        <taxon>Mus</taxon>
    </lineage>
</organism>
<gene>
    <name evidence="7" type="primary">Vapb</name>
</gene>
<sequence length="243" mass="26946">MAKVEQVLSLEPQHELKFRGPFTDVVTTNLKLGNPTDRNVCFKVKTTVPRRYCVRPNSGVIDAGASLNVSVMLQPFDYDPNEKSKHKFMVQSMFAPPDTSDMEAVWKEAKPEDLMDSKLRCVFELPAENAKPHDVEINKIIPTSASKTEAPAAAKSLTSPLDDTEVKKVMEECRRLQGEVQRLREESRQLKEEDGLRVRKAMPSNSPVAALAATGKEEGLSARLLALVVLFFIVGVIIGKIAL</sequence>
<protein>
    <recommendedName>
        <fullName evidence="6">Vesicle-associated membrane protein-associated protein B</fullName>
        <shortName>VAMP-B</shortName>
        <shortName>VAMP-associated protein B</shortName>
        <shortName>VAP-B</shortName>
    </recommendedName>
    <alternativeName>
        <fullName>VAMP-associated protein 33b</fullName>
    </alternativeName>
</protein>
<evidence type="ECO:0000250" key="1">
    <source>
        <dbReference type="UniProtKB" id="O95292"/>
    </source>
</evidence>
<evidence type="ECO:0000250" key="2">
    <source>
        <dbReference type="UniProtKB" id="Q9P0L0"/>
    </source>
</evidence>
<evidence type="ECO:0000255" key="3"/>
<evidence type="ECO:0000255" key="4">
    <source>
        <dbReference type="PROSITE-ProRule" id="PRU00132"/>
    </source>
</evidence>
<evidence type="ECO:0000269" key="5">
    <source>
    </source>
</evidence>
<evidence type="ECO:0000305" key="6"/>
<evidence type="ECO:0000312" key="7">
    <source>
        <dbReference type="MGI" id="MGI:1928744"/>
    </source>
</evidence>
<evidence type="ECO:0007744" key="8">
    <source>
    </source>
</evidence>
<evidence type="ECO:0007829" key="9">
    <source>
        <dbReference type="PDB" id="7X14"/>
    </source>
</evidence>
<comment type="function">
    <text evidence="1">Endoplasmic reticulum (ER)-anchored protein that mediates the formation of contact sites between the ER and endosomes via interaction with FFAT motif-containing proteins such as STARD3 or WDR44. Interacts with STARD3 in a FFAT motif phosphorylation dependent manner. Via interaction with WDR44 participates in neosynthesized protein export. Participates in the endoplasmic reticulum unfolded protein response (UPR) by inducing ERN1/IRE1 activity. Involved in cellular calcium homeostasis regulation.</text>
</comment>
<comment type="subunit">
    <text evidence="1 5">Homodimer, and heterodimer with VAPA. Interacts with VAMP1 and VAMP2. Interacts (via MSP domain) with ZFYVE27 (PubMed:24251978). Interacts with RMDN3. Interacts with KIF5A in a ZFYVE27-dependent manner. Interacts (via MSP domain) with STARD3 (via phospho-FFAT motif). Interacts with STARD3NL (via FFAT motif). Interacts with CERT1. Interacts with PLEKHA3 and SACM1L to form a ternary complex. Interacts with VPS13A (via FFAT motif). Interacts with RB1CC1 (via phosphorylated FFAT motif), MIGA2 (via phosphorylated FFAT motif), RMDN3 (via phosphorylated FFAT motif), OSBPL1A (via FFAT motif), KCNB1 (via phosphorylated FFAT motif) and KCNB2 (via phosphorylated FFAT motif) (By similarity). Interacts (via MSP domain) with WDR44 (via FFAT motif); the interactions connect the endoplasmic reticulum (ER) with the endosomal tubule (By similarity).</text>
</comment>
<comment type="subcellular location">
    <subcellularLocation>
        <location evidence="1">Endoplasmic reticulum membrane</location>
        <topology evidence="2">Single-pass type IV membrane protein</topology>
    </subcellularLocation>
    <text evidence="1">Present in mitochondria-associated membranes that are endoplasmic reticulum membrane regions closely apposed to the outer mitochondrial membrane.</text>
</comment>
<comment type="domain">
    <text evidence="1">The MSP domain binds the FFAT motif of many proteins.</text>
</comment>
<comment type="similarity">
    <text evidence="6">Belongs to the VAMP-associated protein (VAP) (TC 9.B.17) family.</text>
</comment>
<name>VAPB_MOUSE</name>
<keyword id="KW-0002">3D-structure</keyword>
<keyword id="KW-0007">Acetylation</keyword>
<keyword id="KW-0175">Coiled coil</keyword>
<keyword id="KW-0256">Endoplasmic reticulum</keyword>
<keyword id="KW-1017">Isopeptide bond</keyword>
<keyword id="KW-0472">Membrane</keyword>
<keyword id="KW-0597">Phosphoprotein</keyword>
<keyword id="KW-1185">Reference proteome</keyword>
<keyword id="KW-0812">Transmembrane</keyword>
<keyword id="KW-1133">Transmembrane helix</keyword>
<keyword id="KW-0832">Ubl conjugation</keyword>
<keyword id="KW-0834">Unfolded protein response</keyword>
<accession>Q9QY76</accession>